<sequence length="403" mass="45879">MDDRNEIPQDGPASMEPEGVIESTWHEVYDNFDDMNLREELLRGIYGYGFEKPSAIQQRAIIPCVRGRDVIAQAQSGTGKTATFSIAILQQIDTSIRECQALILAPTRELATQIQRVVMALGEYMKVHSHACIGGTNVREDARILESGCHVVVGTPGRVYDMINRKVLRTQYIKLFVLDEADEMLSRGFKDQIQDVFKMLPPDVQVILLSATMPPDVLEVSRCFMRDPVSILVKKEELTLEGIKQFYVNVKQENWKLGTLCDLYDTLSITQSVIFCNTRRKVDQLTQEMSIHNFTVSAMHGDMEQRDREVIMKQFRSGSSRVLITTDLLARGIDVQQVSLVINYDLPSNRENYIHRIGRGGRFGRKGVAINFITDDDRRILKDIEQFYHTTIEEMPANIADLI</sequence>
<feature type="chain" id="PRO_0000054947" description="Eukaryotic initiation factor 4A">
    <location>
        <begin position="1"/>
        <end position="403"/>
    </location>
</feature>
<feature type="domain" description="Helicase ATP-binding" evidence="2">
    <location>
        <begin position="61"/>
        <end position="231"/>
    </location>
</feature>
<feature type="domain" description="Helicase C-terminal" evidence="3">
    <location>
        <begin position="242"/>
        <end position="403"/>
    </location>
</feature>
<feature type="region of interest" description="Disordered" evidence="5">
    <location>
        <begin position="1"/>
        <end position="20"/>
    </location>
</feature>
<feature type="short sequence motif" description="Q motif" evidence="4">
    <location>
        <begin position="30"/>
        <end position="58"/>
    </location>
</feature>
<feature type="short sequence motif" description="DEAD box" evidence="2">
    <location>
        <begin position="179"/>
        <end position="182"/>
    </location>
</feature>
<feature type="binding site" evidence="2">
    <location>
        <begin position="74"/>
        <end position="81"/>
    </location>
    <ligand>
        <name>ATP</name>
        <dbReference type="ChEBI" id="CHEBI:30616"/>
    </ligand>
</feature>
<feature type="sequence conflict" description="In Ref. 1; CAA48790." evidence="10" ref="1">
    <location>
        <position position="167"/>
    </location>
</feature>
<evidence type="ECO:0000250" key="1">
    <source>
        <dbReference type="UniProtKB" id="P60842"/>
    </source>
</evidence>
<evidence type="ECO:0000255" key="2">
    <source>
        <dbReference type="PROSITE-ProRule" id="PRU00541"/>
    </source>
</evidence>
<evidence type="ECO:0000255" key="3">
    <source>
        <dbReference type="PROSITE-ProRule" id="PRU00542"/>
    </source>
</evidence>
<evidence type="ECO:0000255" key="4">
    <source>
        <dbReference type="PROSITE-ProRule" id="PRU00552"/>
    </source>
</evidence>
<evidence type="ECO:0000256" key="5">
    <source>
        <dbReference type="SAM" id="MobiDB-lite"/>
    </source>
</evidence>
<evidence type="ECO:0000269" key="6">
    <source>
    </source>
</evidence>
<evidence type="ECO:0000269" key="7">
    <source>
    </source>
</evidence>
<evidence type="ECO:0000303" key="8">
    <source>
    </source>
</evidence>
<evidence type="ECO:0000303" key="9">
    <source>
    </source>
</evidence>
<evidence type="ECO:0000305" key="10"/>
<evidence type="ECO:0000312" key="11">
    <source>
        <dbReference type="EMBL" id="ACX32995.1"/>
    </source>
</evidence>
<evidence type="ECO:0000312" key="12">
    <source>
        <dbReference type="FlyBase" id="FBgn0001942"/>
    </source>
</evidence>
<evidence type="ECO:0000312" key="13">
    <source>
        <dbReference type="Proteomes" id="UP000000803"/>
    </source>
</evidence>
<keyword id="KW-0067">ATP-binding</keyword>
<keyword id="KW-0963">Cytoplasm</keyword>
<keyword id="KW-0347">Helicase</keyword>
<keyword id="KW-0378">Hydrolase</keyword>
<keyword id="KW-0396">Initiation factor</keyword>
<keyword id="KW-0547">Nucleotide-binding</keyword>
<keyword id="KW-0648">Protein biosynthesis</keyword>
<keyword id="KW-1185">Reference proteome</keyword>
<keyword id="KW-0694">RNA-binding</keyword>
<accession>Q02748</accession>
<accession>A4UZV9</accession>
<accession>C9QP42</accession>
<accession>Q9U9Y6</accession>
<accession>Q9VMJ8</accession>
<dbReference type="EC" id="3.6.4.13"/>
<dbReference type="EMBL" id="X69045">
    <property type="protein sequence ID" value="CAA48790.1"/>
    <property type="molecule type" value="Genomic_DNA"/>
</dbReference>
<dbReference type="EMBL" id="AE014134">
    <property type="protein sequence ID" value="AAF52317.2"/>
    <property type="molecule type" value="Genomic_DNA"/>
</dbReference>
<dbReference type="EMBL" id="AE014134">
    <property type="protein sequence ID" value="AAN10566.1"/>
    <property type="molecule type" value="Genomic_DNA"/>
</dbReference>
<dbReference type="EMBL" id="AE014134">
    <property type="protein sequence ID" value="AAN10567.1"/>
    <property type="molecule type" value="Genomic_DNA"/>
</dbReference>
<dbReference type="EMBL" id="AE014134">
    <property type="protein sequence ID" value="AAN10568.1"/>
    <property type="molecule type" value="Genomic_DNA"/>
</dbReference>
<dbReference type="EMBL" id="AE014134">
    <property type="protein sequence ID" value="AFH03581.1"/>
    <property type="molecule type" value="Genomic_DNA"/>
</dbReference>
<dbReference type="EMBL" id="AE014134">
    <property type="protein sequence ID" value="AGB92653.1"/>
    <property type="molecule type" value="Genomic_DNA"/>
</dbReference>
<dbReference type="EMBL" id="AF145621">
    <property type="protein sequence ID" value="AAD38596.1"/>
    <property type="molecule type" value="mRNA"/>
</dbReference>
<dbReference type="EMBL" id="AY069283">
    <property type="protein sequence ID" value="AAL39428.1"/>
    <property type="molecule type" value="mRNA"/>
</dbReference>
<dbReference type="EMBL" id="AY121623">
    <property type="protein sequence ID" value="AAM51950.1"/>
    <property type="molecule type" value="mRNA"/>
</dbReference>
<dbReference type="EMBL" id="BT099924">
    <property type="protein sequence ID" value="ACX32995.1"/>
    <property type="molecule type" value="mRNA"/>
</dbReference>
<dbReference type="PIR" id="S30278">
    <property type="entry name" value="S30278"/>
</dbReference>
<dbReference type="RefSeq" id="NP_001245907.1">
    <property type="nucleotide sequence ID" value="NM_001258978.3"/>
</dbReference>
<dbReference type="RefSeq" id="NP_001260117.1">
    <property type="nucleotide sequence ID" value="NM_001273188.1"/>
</dbReference>
<dbReference type="RefSeq" id="NP_476595.1">
    <property type="nucleotide sequence ID" value="NM_057247.5"/>
</dbReference>
<dbReference type="RefSeq" id="NP_723137.1">
    <property type="nucleotide sequence ID" value="NM_164668.3"/>
</dbReference>
<dbReference type="RefSeq" id="NP_723138.1">
    <property type="nucleotide sequence ID" value="NM_164669.3"/>
</dbReference>
<dbReference type="RefSeq" id="NP_723139.1">
    <property type="nucleotide sequence ID" value="NM_164670.4"/>
</dbReference>
<dbReference type="SMR" id="Q02748"/>
<dbReference type="BioGRID" id="60000">
    <property type="interactions" value="63"/>
</dbReference>
<dbReference type="DIP" id="DIP-18113N"/>
<dbReference type="FunCoup" id="Q02748">
    <property type="interactions" value="2044"/>
</dbReference>
<dbReference type="IntAct" id="Q02748">
    <property type="interactions" value="24"/>
</dbReference>
<dbReference type="MINT" id="Q02748"/>
<dbReference type="STRING" id="7227.FBpp0297911"/>
<dbReference type="GlyGen" id="Q02748">
    <property type="glycosylation" value="1 site, 1 O-linked glycan (1 site)"/>
</dbReference>
<dbReference type="PaxDb" id="7227-FBpp0297911"/>
<dbReference type="ABCD" id="Q02748">
    <property type="antibodies" value="1 sequenced antibody"/>
</dbReference>
<dbReference type="DNASU" id="33835"/>
<dbReference type="EnsemblMetazoa" id="FBtr0079175">
    <property type="protein sequence ID" value="FBpp0078806"/>
    <property type="gene ID" value="FBgn0001942"/>
</dbReference>
<dbReference type="EnsemblMetazoa" id="FBtr0079176">
    <property type="protein sequence ID" value="FBpp0078807"/>
    <property type="gene ID" value="FBgn0001942"/>
</dbReference>
<dbReference type="EnsemblMetazoa" id="FBtr0079177">
    <property type="protein sequence ID" value="FBpp0078808"/>
    <property type="gene ID" value="FBgn0001942"/>
</dbReference>
<dbReference type="EnsemblMetazoa" id="FBtr0079178">
    <property type="protein sequence ID" value="FBpp0078809"/>
    <property type="gene ID" value="FBgn0001942"/>
</dbReference>
<dbReference type="EnsemblMetazoa" id="FBtr0307068">
    <property type="protein sequence ID" value="FBpp0297911"/>
    <property type="gene ID" value="FBgn0001942"/>
</dbReference>
<dbReference type="EnsemblMetazoa" id="FBtr0331201">
    <property type="protein sequence ID" value="FBpp0303628"/>
    <property type="gene ID" value="FBgn0001942"/>
</dbReference>
<dbReference type="GeneID" id="33835"/>
<dbReference type="KEGG" id="dme:Dmel_CG9075"/>
<dbReference type="AGR" id="FB:FBgn0001942"/>
<dbReference type="CTD" id="33835"/>
<dbReference type="FlyBase" id="FBgn0001942">
    <property type="gene designation" value="eIF4A"/>
</dbReference>
<dbReference type="VEuPathDB" id="VectorBase:FBgn0001942"/>
<dbReference type="eggNOG" id="KOG0327">
    <property type="taxonomic scope" value="Eukaryota"/>
</dbReference>
<dbReference type="GeneTree" id="ENSGT00940000153889"/>
<dbReference type="HOGENOM" id="CLU_003041_1_0_1"/>
<dbReference type="InParanoid" id="Q02748"/>
<dbReference type="OMA" id="FGCQALV"/>
<dbReference type="OrthoDB" id="10265785at2759"/>
<dbReference type="PhylomeDB" id="Q02748"/>
<dbReference type="Reactome" id="R-DME-1169408">
    <property type="pathway name" value="ISG15 antiviral mechanism"/>
</dbReference>
<dbReference type="Reactome" id="R-DME-156827">
    <property type="pathway name" value="L13a-mediated translational silencing of Ceruloplasmin expression"/>
</dbReference>
<dbReference type="Reactome" id="R-DME-72649">
    <property type="pathway name" value="Translation initiation complex formation"/>
</dbReference>
<dbReference type="Reactome" id="R-DME-72662">
    <property type="pathway name" value="Activation of the mRNA upon binding of the cap-binding complex and eIFs, and subsequent binding to 43S"/>
</dbReference>
<dbReference type="Reactome" id="R-DME-72702">
    <property type="pathway name" value="Ribosomal scanning and start codon recognition"/>
</dbReference>
<dbReference type="SignaLink" id="Q02748"/>
<dbReference type="BioGRID-ORCS" id="33835">
    <property type="hits" value="1 hit in 3 CRISPR screens"/>
</dbReference>
<dbReference type="CD-CODE" id="A6E1D014">
    <property type="entry name" value="P-body"/>
</dbReference>
<dbReference type="ChiTaRS" id="eIF-4a">
    <property type="organism name" value="fly"/>
</dbReference>
<dbReference type="GenomeRNAi" id="33835"/>
<dbReference type="PRO" id="PR:Q02748"/>
<dbReference type="Proteomes" id="UP000000803">
    <property type="component" value="Chromosome 2L"/>
</dbReference>
<dbReference type="Bgee" id="FBgn0001942">
    <property type="expression patterns" value="Expressed in second segment of antenna (Drosophila) and 295 other cell types or tissues"/>
</dbReference>
<dbReference type="ExpressionAtlas" id="Q02748">
    <property type="expression patterns" value="baseline and differential"/>
</dbReference>
<dbReference type="GO" id="GO:0010494">
    <property type="term" value="C:cytoplasmic stress granule"/>
    <property type="evidence" value="ECO:0000318"/>
    <property type="project" value="GO_Central"/>
</dbReference>
<dbReference type="GO" id="GO:0005829">
    <property type="term" value="C:cytosol"/>
    <property type="evidence" value="ECO:0000314"/>
    <property type="project" value="FlyBase"/>
</dbReference>
<dbReference type="GO" id="GO:0016281">
    <property type="term" value="C:eukaryotic translation initiation factor 4F complex"/>
    <property type="evidence" value="ECO:0000250"/>
    <property type="project" value="FlyBase"/>
</dbReference>
<dbReference type="GO" id="GO:0005634">
    <property type="term" value="C:nucleus"/>
    <property type="evidence" value="ECO:0007005"/>
    <property type="project" value="FlyBase"/>
</dbReference>
<dbReference type="GO" id="GO:0043186">
    <property type="term" value="C:P granule"/>
    <property type="evidence" value="ECO:0000314"/>
    <property type="project" value="FlyBase"/>
</dbReference>
<dbReference type="GO" id="GO:0005524">
    <property type="term" value="F:ATP binding"/>
    <property type="evidence" value="ECO:0007669"/>
    <property type="project" value="UniProtKB-KW"/>
</dbReference>
<dbReference type="GO" id="GO:0016887">
    <property type="term" value="F:ATP hydrolysis activity"/>
    <property type="evidence" value="ECO:0007669"/>
    <property type="project" value="RHEA"/>
</dbReference>
<dbReference type="GO" id="GO:0003723">
    <property type="term" value="F:RNA binding"/>
    <property type="evidence" value="ECO:0007669"/>
    <property type="project" value="UniProtKB-KW"/>
</dbReference>
<dbReference type="GO" id="GO:0003724">
    <property type="term" value="F:RNA helicase activity"/>
    <property type="evidence" value="ECO:0000250"/>
    <property type="project" value="FlyBase"/>
</dbReference>
<dbReference type="GO" id="GO:0046332">
    <property type="term" value="F:SMAD binding"/>
    <property type="evidence" value="ECO:0000353"/>
    <property type="project" value="FlyBase"/>
</dbReference>
<dbReference type="GO" id="GO:0003743">
    <property type="term" value="F:translation initiation factor activity"/>
    <property type="evidence" value="ECO:0000250"/>
    <property type="project" value="FlyBase"/>
</dbReference>
<dbReference type="GO" id="GO:0002183">
    <property type="term" value="P:cytoplasmic translational initiation"/>
    <property type="evidence" value="ECO:0000318"/>
    <property type="project" value="GO_Central"/>
</dbReference>
<dbReference type="GO" id="GO:0048132">
    <property type="term" value="P:female germ-line stem cell asymmetric division"/>
    <property type="evidence" value="ECO:0000315"/>
    <property type="project" value="FlyBase"/>
</dbReference>
<dbReference type="GO" id="GO:0030718">
    <property type="term" value="P:germ-line stem cell population maintenance"/>
    <property type="evidence" value="ECO:0000315"/>
    <property type="project" value="FlyBase"/>
</dbReference>
<dbReference type="GO" id="GO:0000278">
    <property type="term" value="P:mitotic cell cycle"/>
    <property type="evidence" value="ECO:0007001"/>
    <property type="project" value="FlyBase"/>
</dbReference>
<dbReference type="GO" id="GO:0030514">
    <property type="term" value="P:negative regulation of BMP signaling pathway"/>
    <property type="evidence" value="ECO:0000314"/>
    <property type="project" value="FlyBase"/>
</dbReference>
<dbReference type="GO" id="GO:0048477">
    <property type="term" value="P:oogenesis"/>
    <property type="evidence" value="ECO:0000315"/>
    <property type="project" value="FlyBase"/>
</dbReference>
<dbReference type="GO" id="GO:0007279">
    <property type="term" value="P:pole cell formation"/>
    <property type="evidence" value="ECO:0000316"/>
    <property type="project" value="FlyBase"/>
</dbReference>
<dbReference type="GO" id="GO:0032436">
    <property type="term" value="P:positive regulation of proteasomal ubiquitin-dependent protein catabolic process"/>
    <property type="evidence" value="ECO:0000314"/>
    <property type="project" value="FlyBase"/>
</dbReference>
<dbReference type="GO" id="GO:0000381">
    <property type="term" value="P:regulation of alternative mRNA splicing, via spliceosome"/>
    <property type="evidence" value="ECO:0000315"/>
    <property type="project" value="FlyBase"/>
</dbReference>
<dbReference type="GO" id="GO:0006413">
    <property type="term" value="P:translational initiation"/>
    <property type="evidence" value="ECO:0000250"/>
    <property type="project" value="FlyBase"/>
</dbReference>
<dbReference type="CDD" id="cd18046">
    <property type="entry name" value="DEADc_EIF4AII_EIF4AI_DDX2"/>
    <property type="match status" value="1"/>
</dbReference>
<dbReference type="CDD" id="cd18787">
    <property type="entry name" value="SF2_C_DEAD"/>
    <property type="match status" value="1"/>
</dbReference>
<dbReference type="FunFam" id="3.40.50.300:FF:000089">
    <property type="entry name" value="Eukaryotic initiation factor 4A-II"/>
    <property type="match status" value="1"/>
</dbReference>
<dbReference type="FunFam" id="3.40.50.300:FF:000031">
    <property type="entry name" value="Eukaryotic initiation factor 4A-III"/>
    <property type="match status" value="1"/>
</dbReference>
<dbReference type="Gene3D" id="3.40.50.300">
    <property type="entry name" value="P-loop containing nucleotide triphosphate hydrolases"/>
    <property type="match status" value="2"/>
</dbReference>
<dbReference type="InterPro" id="IPR011545">
    <property type="entry name" value="DEAD/DEAH_box_helicase_dom"/>
</dbReference>
<dbReference type="InterPro" id="IPR044728">
    <property type="entry name" value="EIF4A_DEADc"/>
</dbReference>
<dbReference type="InterPro" id="IPR014001">
    <property type="entry name" value="Helicase_ATP-bd"/>
</dbReference>
<dbReference type="InterPro" id="IPR001650">
    <property type="entry name" value="Helicase_C-like"/>
</dbReference>
<dbReference type="InterPro" id="IPR027417">
    <property type="entry name" value="P-loop_NTPase"/>
</dbReference>
<dbReference type="InterPro" id="IPR000629">
    <property type="entry name" value="RNA-helicase_DEAD-box_CS"/>
</dbReference>
<dbReference type="InterPro" id="IPR014014">
    <property type="entry name" value="RNA_helicase_DEAD_Q_motif"/>
</dbReference>
<dbReference type="PANTHER" id="PTHR47958">
    <property type="entry name" value="ATP-DEPENDENT RNA HELICASE DBP3"/>
    <property type="match status" value="1"/>
</dbReference>
<dbReference type="Pfam" id="PF00270">
    <property type="entry name" value="DEAD"/>
    <property type="match status" value="1"/>
</dbReference>
<dbReference type="Pfam" id="PF00271">
    <property type="entry name" value="Helicase_C"/>
    <property type="match status" value="1"/>
</dbReference>
<dbReference type="SMART" id="SM00487">
    <property type="entry name" value="DEXDc"/>
    <property type="match status" value="1"/>
</dbReference>
<dbReference type="SMART" id="SM00490">
    <property type="entry name" value="HELICc"/>
    <property type="match status" value="1"/>
</dbReference>
<dbReference type="SUPFAM" id="SSF52540">
    <property type="entry name" value="P-loop containing nucleoside triphosphate hydrolases"/>
    <property type="match status" value="1"/>
</dbReference>
<dbReference type="PROSITE" id="PS00039">
    <property type="entry name" value="DEAD_ATP_HELICASE"/>
    <property type="match status" value="1"/>
</dbReference>
<dbReference type="PROSITE" id="PS51192">
    <property type="entry name" value="HELICASE_ATP_BIND_1"/>
    <property type="match status" value="1"/>
</dbReference>
<dbReference type="PROSITE" id="PS51194">
    <property type="entry name" value="HELICASE_CTER"/>
    <property type="match status" value="1"/>
</dbReference>
<dbReference type="PROSITE" id="PS51195">
    <property type="entry name" value="Q_MOTIF"/>
    <property type="match status" value="1"/>
</dbReference>
<comment type="function">
    <text evidence="1 6 7">ATP-dependent RNA helicase which is a subunit of the eIF4F complex involved in cap recognition and is required for mRNA binding to ribosome. In the current model of translation initiation, eIF4A unwinds RNA secondary structures in the 5'-UTR of mRNAs which is necessary to allow efficient binding of the small ribosomal subunit, and subsequent scanning for the initiator codon. As a result, promotes cell proliferation and growth (By similarity). Binds and antagonises the bam-bgcn complex; probably prevents bam mediated translational repression of shg/E-cadherin (PubMed:19556547). Involved in germ cell formation (PubMed:18590813). Involved in germline stem cell maintenance and proliferation; prevents differentiation (PubMed:19556547).</text>
</comment>
<comment type="catalytic activity">
    <reaction>
        <text>ATP + H2O = ADP + phosphate + H(+)</text>
        <dbReference type="Rhea" id="RHEA:13065"/>
        <dbReference type="ChEBI" id="CHEBI:15377"/>
        <dbReference type="ChEBI" id="CHEBI:15378"/>
        <dbReference type="ChEBI" id="CHEBI:30616"/>
        <dbReference type="ChEBI" id="CHEBI:43474"/>
        <dbReference type="ChEBI" id="CHEBI:456216"/>
        <dbReference type="EC" id="3.6.4.13"/>
    </reaction>
</comment>
<comment type="subunit">
    <text evidence="6 7">eIF4F is a multi-subunit complex, the composition of which varies with external and internal environmental conditions (PubMed:18590813). It is composed of at least eIF4A, eIF4E1 and eIF4G1. Interacts with tud and vas (PubMed:18590813). Interacts (via multiple contacts) with bam; the interaction is direct (PubMed:19556547).</text>
</comment>
<comment type="interaction">
    <interactant intactId="EBI-85570">
        <id>Q02748</id>
    </interactant>
    <interactant intactId="EBI-88504">
        <id>P22745</id>
        <label>bam</label>
    </interactant>
    <organismsDiffer>false</organismsDiffer>
    <experiments>4</experiments>
</comment>
<comment type="subcellular location">
    <subcellularLocation>
        <location evidence="6">Cytoplasm</location>
    </subcellularLocation>
    <subcellularLocation>
        <location evidence="6">Cytoplasm</location>
        <location evidence="6">Cytoplasmic ribonucleoprotein granule</location>
    </subcellularLocation>
    <text evidence="6">Component of the meiotic nuage (also known as germline granule or P granule), a germline-specific membraneless ribonucleoprotein biocondensate involved in post-transcriptional regulation of transposons and mRNAs.</text>
</comment>
<comment type="similarity">
    <text evidence="10">Belongs to the DEAD box helicase family. eIF4A subfamily.</text>
</comment>
<gene>
    <name evidence="8 12" type="primary">eIF4A</name>
    <name evidence="9" type="synonym">eIF-4a</name>
    <name type="synonym">l(2L)162</name>
    <name evidence="12" type="ORF">CG9075</name>
</gene>
<protein>
    <recommendedName>
        <fullName>Eukaryotic initiation factor 4A</fullName>
        <ecNumber>3.6.4.13</ecNumber>
    </recommendedName>
    <alternativeName>
        <fullName>ATP-dependent RNA helicase eIF4A</fullName>
    </alternativeName>
</protein>
<reference key="1">
    <citation type="journal article" date="1993" name="Mol. Gen. Genet.">
        <title>Identification of an essential Drosophila gene that is homologous to the translation initiation factor eIF-4A of yeast and mouse.</title>
        <authorList>
            <person name="Dorn R."/>
            <person name="Morawietz H."/>
            <person name="Reuter G."/>
            <person name="Saumweber H."/>
        </authorList>
    </citation>
    <scope>NUCLEOTIDE SEQUENCE [GENOMIC DNA]</scope>
    <source>
        <strain>Oregon-R</strain>
        <tissue>Embryo</tissue>
    </source>
</reference>
<reference key="2">
    <citation type="journal article" date="2000" name="Science">
        <title>The genome sequence of Drosophila melanogaster.</title>
        <authorList>
            <person name="Adams M.D."/>
            <person name="Celniker S.E."/>
            <person name="Holt R.A."/>
            <person name="Evans C.A."/>
            <person name="Gocayne J.D."/>
            <person name="Amanatides P.G."/>
            <person name="Scherer S.E."/>
            <person name="Li P.W."/>
            <person name="Hoskins R.A."/>
            <person name="Galle R.F."/>
            <person name="George R.A."/>
            <person name="Lewis S.E."/>
            <person name="Richards S."/>
            <person name="Ashburner M."/>
            <person name="Henderson S.N."/>
            <person name="Sutton G.G."/>
            <person name="Wortman J.R."/>
            <person name="Yandell M.D."/>
            <person name="Zhang Q."/>
            <person name="Chen L.X."/>
            <person name="Brandon R.C."/>
            <person name="Rogers Y.-H.C."/>
            <person name="Blazej R.G."/>
            <person name="Champe M."/>
            <person name="Pfeiffer B.D."/>
            <person name="Wan K.H."/>
            <person name="Doyle C."/>
            <person name="Baxter E.G."/>
            <person name="Helt G."/>
            <person name="Nelson C.R."/>
            <person name="Miklos G.L.G."/>
            <person name="Abril J.F."/>
            <person name="Agbayani A."/>
            <person name="An H.-J."/>
            <person name="Andrews-Pfannkoch C."/>
            <person name="Baldwin D."/>
            <person name="Ballew R.M."/>
            <person name="Basu A."/>
            <person name="Baxendale J."/>
            <person name="Bayraktaroglu L."/>
            <person name="Beasley E.M."/>
            <person name="Beeson K.Y."/>
            <person name="Benos P.V."/>
            <person name="Berman B.P."/>
            <person name="Bhandari D."/>
            <person name="Bolshakov S."/>
            <person name="Borkova D."/>
            <person name="Botchan M.R."/>
            <person name="Bouck J."/>
            <person name="Brokstein P."/>
            <person name="Brottier P."/>
            <person name="Burtis K.C."/>
            <person name="Busam D.A."/>
            <person name="Butler H."/>
            <person name="Cadieu E."/>
            <person name="Center A."/>
            <person name="Chandra I."/>
            <person name="Cherry J.M."/>
            <person name="Cawley S."/>
            <person name="Dahlke C."/>
            <person name="Davenport L.B."/>
            <person name="Davies P."/>
            <person name="de Pablos B."/>
            <person name="Delcher A."/>
            <person name="Deng Z."/>
            <person name="Mays A.D."/>
            <person name="Dew I."/>
            <person name="Dietz S.M."/>
            <person name="Dodson K."/>
            <person name="Doup L.E."/>
            <person name="Downes M."/>
            <person name="Dugan-Rocha S."/>
            <person name="Dunkov B.C."/>
            <person name="Dunn P."/>
            <person name="Durbin K.J."/>
            <person name="Evangelista C.C."/>
            <person name="Ferraz C."/>
            <person name="Ferriera S."/>
            <person name="Fleischmann W."/>
            <person name="Fosler C."/>
            <person name="Gabrielian A.E."/>
            <person name="Garg N.S."/>
            <person name="Gelbart W.M."/>
            <person name="Glasser K."/>
            <person name="Glodek A."/>
            <person name="Gong F."/>
            <person name="Gorrell J.H."/>
            <person name="Gu Z."/>
            <person name="Guan P."/>
            <person name="Harris M."/>
            <person name="Harris N.L."/>
            <person name="Harvey D.A."/>
            <person name="Heiman T.J."/>
            <person name="Hernandez J.R."/>
            <person name="Houck J."/>
            <person name="Hostin D."/>
            <person name="Houston K.A."/>
            <person name="Howland T.J."/>
            <person name="Wei M.-H."/>
            <person name="Ibegwam C."/>
            <person name="Jalali M."/>
            <person name="Kalush F."/>
            <person name="Karpen G.H."/>
            <person name="Ke Z."/>
            <person name="Kennison J.A."/>
            <person name="Ketchum K.A."/>
            <person name="Kimmel B.E."/>
            <person name="Kodira C.D."/>
            <person name="Kraft C.L."/>
            <person name="Kravitz S."/>
            <person name="Kulp D."/>
            <person name="Lai Z."/>
            <person name="Lasko P."/>
            <person name="Lei Y."/>
            <person name="Levitsky A.A."/>
            <person name="Li J.H."/>
            <person name="Li Z."/>
            <person name="Liang Y."/>
            <person name="Lin X."/>
            <person name="Liu X."/>
            <person name="Mattei B."/>
            <person name="McIntosh T.C."/>
            <person name="McLeod M.P."/>
            <person name="McPherson D."/>
            <person name="Merkulov G."/>
            <person name="Milshina N.V."/>
            <person name="Mobarry C."/>
            <person name="Morris J."/>
            <person name="Moshrefi A."/>
            <person name="Mount S.M."/>
            <person name="Moy M."/>
            <person name="Murphy B."/>
            <person name="Murphy L."/>
            <person name="Muzny D.M."/>
            <person name="Nelson D.L."/>
            <person name="Nelson D.R."/>
            <person name="Nelson K.A."/>
            <person name="Nixon K."/>
            <person name="Nusskern D.R."/>
            <person name="Pacleb J.M."/>
            <person name="Palazzolo M."/>
            <person name="Pittman G.S."/>
            <person name="Pan S."/>
            <person name="Pollard J."/>
            <person name="Puri V."/>
            <person name="Reese M.G."/>
            <person name="Reinert K."/>
            <person name="Remington K."/>
            <person name="Saunders R.D.C."/>
            <person name="Scheeler F."/>
            <person name="Shen H."/>
            <person name="Shue B.C."/>
            <person name="Siden-Kiamos I."/>
            <person name="Simpson M."/>
            <person name="Skupski M.P."/>
            <person name="Smith T.J."/>
            <person name="Spier E."/>
            <person name="Spradling A.C."/>
            <person name="Stapleton M."/>
            <person name="Strong R."/>
            <person name="Sun E."/>
            <person name="Svirskas R."/>
            <person name="Tector C."/>
            <person name="Turner R."/>
            <person name="Venter E."/>
            <person name="Wang A.H."/>
            <person name="Wang X."/>
            <person name="Wang Z.-Y."/>
            <person name="Wassarman D.A."/>
            <person name="Weinstock G.M."/>
            <person name="Weissenbach J."/>
            <person name="Williams S.M."/>
            <person name="Woodage T."/>
            <person name="Worley K.C."/>
            <person name="Wu D."/>
            <person name="Yang S."/>
            <person name="Yao Q.A."/>
            <person name="Ye J."/>
            <person name="Yeh R.-F."/>
            <person name="Zaveri J.S."/>
            <person name="Zhan M."/>
            <person name="Zhang G."/>
            <person name="Zhao Q."/>
            <person name="Zheng L."/>
            <person name="Zheng X.H."/>
            <person name="Zhong F.N."/>
            <person name="Zhong W."/>
            <person name="Zhou X."/>
            <person name="Zhu S.C."/>
            <person name="Zhu X."/>
            <person name="Smith H.O."/>
            <person name="Gibbs R.A."/>
            <person name="Myers E.W."/>
            <person name="Rubin G.M."/>
            <person name="Venter J.C."/>
        </authorList>
    </citation>
    <scope>NUCLEOTIDE SEQUENCE [LARGE SCALE GENOMIC DNA]</scope>
    <source>
        <strain>Berkeley</strain>
    </source>
</reference>
<reference key="3">
    <citation type="journal article" date="2002" name="Genome Biol.">
        <title>Annotation of the Drosophila melanogaster euchromatic genome: a systematic review.</title>
        <authorList>
            <person name="Misra S."/>
            <person name="Crosby M.A."/>
            <person name="Mungall C.J."/>
            <person name="Matthews B.B."/>
            <person name="Campbell K.S."/>
            <person name="Hradecky P."/>
            <person name="Huang Y."/>
            <person name="Kaminker J.S."/>
            <person name="Millburn G.H."/>
            <person name="Prochnik S.E."/>
            <person name="Smith C.D."/>
            <person name="Tupy J.L."/>
            <person name="Whitfield E.J."/>
            <person name="Bayraktaroglu L."/>
            <person name="Berman B.P."/>
            <person name="Bettencourt B.R."/>
            <person name="Celniker S.E."/>
            <person name="de Grey A.D.N.J."/>
            <person name="Drysdale R.A."/>
            <person name="Harris N.L."/>
            <person name="Richter J."/>
            <person name="Russo S."/>
            <person name="Schroeder A.J."/>
            <person name="Shu S.Q."/>
            <person name="Stapleton M."/>
            <person name="Yamada C."/>
            <person name="Ashburner M."/>
            <person name="Gelbart W.M."/>
            <person name="Rubin G.M."/>
            <person name="Lewis S.E."/>
        </authorList>
    </citation>
    <scope>GENOME REANNOTATION</scope>
    <source>
        <strain>Berkeley</strain>
    </source>
</reference>
<reference key="4">
    <citation type="journal article" date="2000" name="Science">
        <title>A Drosophila complementary DNA resource.</title>
        <authorList>
            <person name="Rubin G.M."/>
            <person name="Hong L."/>
            <person name="Brokstein P."/>
            <person name="Evans-Holm M."/>
            <person name="Frise E."/>
            <person name="Stapleton M."/>
            <person name="Harvey D.A."/>
        </authorList>
    </citation>
    <scope>NUCLEOTIDE SEQUENCE [LARGE SCALE MRNA]</scope>
    <source>
        <strain>Berkeley</strain>
        <tissue>Head</tissue>
    </source>
</reference>
<reference key="5">
    <citation type="journal article" date="2002" name="Genome Biol.">
        <title>A Drosophila full-length cDNA resource.</title>
        <authorList>
            <person name="Stapleton M."/>
            <person name="Carlson J.W."/>
            <person name="Brokstein P."/>
            <person name="Yu C."/>
            <person name="Champe M."/>
            <person name="George R.A."/>
            <person name="Guarin H."/>
            <person name="Kronmiller B."/>
            <person name="Pacleb J.M."/>
            <person name="Park S."/>
            <person name="Wan K.H."/>
            <person name="Rubin G.M."/>
            <person name="Celniker S.E."/>
        </authorList>
    </citation>
    <scope>NUCLEOTIDE SEQUENCE [LARGE SCALE MRNA]</scope>
    <source>
        <strain>Berkeley</strain>
        <tissue>Head</tissue>
        <tissue>Ovary</tissue>
    </source>
</reference>
<reference evidence="11" key="6">
    <citation type="submission" date="2009-10" db="EMBL/GenBank/DDBJ databases">
        <authorList>
            <person name="Carlson J."/>
            <person name="Booth B."/>
            <person name="Frise E."/>
            <person name="Park S."/>
            <person name="Wan K."/>
            <person name="Yu C."/>
            <person name="Celniker S."/>
        </authorList>
    </citation>
    <scope>NUCLEOTIDE SEQUENCE [LARGE SCALE MRNA]</scope>
    <source>
        <strain evidence="11">Berkeley</strain>
    </source>
</reference>
<reference key="7">
    <citation type="journal article" date="2008" name="Mech. Dev.">
        <title>Isolation of new polar granule components in Drosophila reveals P body and ER associated proteins.</title>
        <authorList>
            <person name="Thomson T."/>
            <person name="Liu N."/>
            <person name="Arkov A."/>
            <person name="Lehmann R."/>
            <person name="Lasko P."/>
        </authorList>
    </citation>
    <scope>FUNCTION</scope>
    <scope>INTERACTION WITH TUD AND VAS</scope>
    <scope>SUBCELLULAR LOCATION</scope>
</reference>
<reference key="8">
    <citation type="journal article" date="2009" name="Proc. Natl. Acad. Sci. U.S.A.">
        <title>eIF4A controls germline stem cell self-renewal by directly inhibiting BAM function in the Drosophila ovary.</title>
        <authorList>
            <person name="Shen R."/>
            <person name="Weng C."/>
            <person name="Yu J."/>
            <person name="Xie T."/>
        </authorList>
    </citation>
    <scope>FUNCTION</scope>
    <scope>INTERACTION WITH BAM</scope>
</reference>
<name>IF4A_DROME</name>
<proteinExistence type="evidence at protein level"/>
<organism evidence="13">
    <name type="scientific">Drosophila melanogaster</name>
    <name type="common">Fruit fly</name>
    <dbReference type="NCBI Taxonomy" id="7227"/>
    <lineage>
        <taxon>Eukaryota</taxon>
        <taxon>Metazoa</taxon>
        <taxon>Ecdysozoa</taxon>
        <taxon>Arthropoda</taxon>
        <taxon>Hexapoda</taxon>
        <taxon>Insecta</taxon>
        <taxon>Pterygota</taxon>
        <taxon>Neoptera</taxon>
        <taxon>Endopterygota</taxon>
        <taxon>Diptera</taxon>
        <taxon>Brachycera</taxon>
        <taxon>Muscomorpha</taxon>
        <taxon>Ephydroidea</taxon>
        <taxon>Drosophilidae</taxon>
        <taxon>Drosophila</taxon>
        <taxon>Sophophora</taxon>
    </lineage>
</organism>